<accession>B9DQA0</accession>
<proteinExistence type="inferred from homology"/>
<organism>
    <name type="scientific">Staphylococcus carnosus (strain TM300)</name>
    <dbReference type="NCBI Taxonomy" id="396513"/>
    <lineage>
        <taxon>Bacteria</taxon>
        <taxon>Bacillati</taxon>
        <taxon>Bacillota</taxon>
        <taxon>Bacilli</taxon>
        <taxon>Bacillales</taxon>
        <taxon>Staphylococcaceae</taxon>
        <taxon>Staphylococcus</taxon>
    </lineage>
</organism>
<gene>
    <name evidence="1" type="primary">prfC</name>
    <name type="ordered locus">Sca_0623</name>
</gene>
<name>RF3_STACT</name>
<evidence type="ECO:0000255" key="1">
    <source>
        <dbReference type="HAMAP-Rule" id="MF_00072"/>
    </source>
</evidence>
<feature type="chain" id="PRO_1000193535" description="Peptide chain release factor 3">
    <location>
        <begin position="1"/>
        <end position="520"/>
    </location>
</feature>
<feature type="domain" description="tr-type G">
    <location>
        <begin position="8"/>
        <end position="273"/>
    </location>
</feature>
<feature type="binding site" evidence="1">
    <location>
        <begin position="17"/>
        <end position="24"/>
    </location>
    <ligand>
        <name>GTP</name>
        <dbReference type="ChEBI" id="CHEBI:37565"/>
    </ligand>
</feature>
<feature type="binding site" evidence="1">
    <location>
        <begin position="85"/>
        <end position="89"/>
    </location>
    <ligand>
        <name>GTP</name>
        <dbReference type="ChEBI" id="CHEBI:37565"/>
    </ligand>
</feature>
<feature type="binding site" evidence="1">
    <location>
        <begin position="139"/>
        <end position="142"/>
    </location>
    <ligand>
        <name>GTP</name>
        <dbReference type="ChEBI" id="CHEBI:37565"/>
    </ligand>
</feature>
<dbReference type="EMBL" id="AM295250">
    <property type="protein sequence ID" value="CAL27535.1"/>
    <property type="molecule type" value="Genomic_DNA"/>
</dbReference>
<dbReference type="RefSeq" id="WP_015899878.1">
    <property type="nucleotide sequence ID" value="NC_012121.1"/>
</dbReference>
<dbReference type="SMR" id="B9DQA0"/>
<dbReference type="GeneID" id="93795560"/>
<dbReference type="KEGG" id="sca:SCA_0623"/>
<dbReference type="eggNOG" id="COG4108">
    <property type="taxonomic scope" value="Bacteria"/>
</dbReference>
<dbReference type="HOGENOM" id="CLU_002794_2_1_9"/>
<dbReference type="OrthoDB" id="9804431at2"/>
<dbReference type="BioCyc" id="SCAR396513:SCA_RS03165-MONOMER"/>
<dbReference type="Proteomes" id="UP000000444">
    <property type="component" value="Chromosome"/>
</dbReference>
<dbReference type="GO" id="GO:0005829">
    <property type="term" value="C:cytosol"/>
    <property type="evidence" value="ECO:0007669"/>
    <property type="project" value="TreeGrafter"/>
</dbReference>
<dbReference type="GO" id="GO:0005525">
    <property type="term" value="F:GTP binding"/>
    <property type="evidence" value="ECO:0007669"/>
    <property type="project" value="UniProtKB-UniRule"/>
</dbReference>
<dbReference type="GO" id="GO:0003924">
    <property type="term" value="F:GTPase activity"/>
    <property type="evidence" value="ECO:0007669"/>
    <property type="project" value="InterPro"/>
</dbReference>
<dbReference type="GO" id="GO:0016150">
    <property type="term" value="F:translation release factor activity, codon nonspecific"/>
    <property type="evidence" value="ECO:0007669"/>
    <property type="project" value="TreeGrafter"/>
</dbReference>
<dbReference type="GO" id="GO:0016149">
    <property type="term" value="F:translation release factor activity, codon specific"/>
    <property type="evidence" value="ECO:0007669"/>
    <property type="project" value="UniProtKB-UniRule"/>
</dbReference>
<dbReference type="GO" id="GO:0006449">
    <property type="term" value="P:regulation of translational termination"/>
    <property type="evidence" value="ECO:0007669"/>
    <property type="project" value="UniProtKB-UniRule"/>
</dbReference>
<dbReference type="CDD" id="cd04169">
    <property type="entry name" value="RF3"/>
    <property type="match status" value="1"/>
</dbReference>
<dbReference type="FunFam" id="2.40.30.10:FF:000040">
    <property type="entry name" value="Peptide chain release factor 3"/>
    <property type="match status" value="1"/>
</dbReference>
<dbReference type="FunFam" id="3.30.70.3280:FF:000001">
    <property type="entry name" value="Peptide chain release factor 3"/>
    <property type="match status" value="1"/>
</dbReference>
<dbReference type="FunFam" id="3.40.50.300:FF:000542">
    <property type="entry name" value="Peptide chain release factor 3"/>
    <property type="match status" value="1"/>
</dbReference>
<dbReference type="Gene3D" id="3.40.50.300">
    <property type="entry name" value="P-loop containing nucleotide triphosphate hydrolases"/>
    <property type="match status" value="1"/>
</dbReference>
<dbReference type="Gene3D" id="3.30.70.3280">
    <property type="entry name" value="Peptide chain release factor 3, domain III"/>
    <property type="match status" value="1"/>
</dbReference>
<dbReference type="Gene3D" id="2.40.30.10">
    <property type="entry name" value="Translation factors"/>
    <property type="match status" value="1"/>
</dbReference>
<dbReference type="HAMAP" id="MF_00072">
    <property type="entry name" value="Rel_fac_3"/>
    <property type="match status" value="1"/>
</dbReference>
<dbReference type="InterPro" id="IPR053905">
    <property type="entry name" value="EF-G-like_DII"/>
</dbReference>
<dbReference type="InterPro" id="IPR035647">
    <property type="entry name" value="EFG_III/V"/>
</dbReference>
<dbReference type="InterPro" id="IPR031157">
    <property type="entry name" value="G_TR_CS"/>
</dbReference>
<dbReference type="InterPro" id="IPR027417">
    <property type="entry name" value="P-loop_NTPase"/>
</dbReference>
<dbReference type="InterPro" id="IPR004548">
    <property type="entry name" value="PrfC"/>
</dbReference>
<dbReference type="InterPro" id="IPR032090">
    <property type="entry name" value="RF3_C"/>
</dbReference>
<dbReference type="InterPro" id="IPR038467">
    <property type="entry name" value="RF3_dom_3_sf"/>
</dbReference>
<dbReference type="InterPro" id="IPR041732">
    <property type="entry name" value="RF3_GTP-bd"/>
</dbReference>
<dbReference type="InterPro" id="IPR005225">
    <property type="entry name" value="Small_GTP-bd"/>
</dbReference>
<dbReference type="InterPro" id="IPR000795">
    <property type="entry name" value="T_Tr_GTP-bd_dom"/>
</dbReference>
<dbReference type="InterPro" id="IPR009000">
    <property type="entry name" value="Transl_B-barrel_sf"/>
</dbReference>
<dbReference type="NCBIfam" id="TIGR00503">
    <property type="entry name" value="prfC"/>
    <property type="match status" value="1"/>
</dbReference>
<dbReference type="NCBIfam" id="NF001964">
    <property type="entry name" value="PRK00741.1"/>
    <property type="match status" value="1"/>
</dbReference>
<dbReference type="NCBIfam" id="TIGR00231">
    <property type="entry name" value="small_GTP"/>
    <property type="match status" value="1"/>
</dbReference>
<dbReference type="PANTHER" id="PTHR43556">
    <property type="entry name" value="PEPTIDE CHAIN RELEASE FACTOR RF3"/>
    <property type="match status" value="1"/>
</dbReference>
<dbReference type="PANTHER" id="PTHR43556:SF2">
    <property type="entry name" value="PEPTIDE CHAIN RELEASE FACTOR RF3"/>
    <property type="match status" value="1"/>
</dbReference>
<dbReference type="Pfam" id="PF22042">
    <property type="entry name" value="EF-G_D2"/>
    <property type="match status" value="1"/>
</dbReference>
<dbReference type="Pfam" id="PF00009">
    <property type="entry name" value="GTP_EFTU"/>
    <property type="match status" value="1"/>
</dbReference>
<dbReference type="Pfam" id="PF16658">
    <property type="entry name" value="RF3_C"/>
    <property type="match status" value="1"/>
</dbReference>
<dbReference type="PRINTS" id="PR00315">
    <property type="entry name" value="ELONGATNFCT"/>
</dbReference>
<dbReference type="SUPFAM" id="SSF54980">
    <property type="entry name" value="EF-G C-terminal domain-like"/>
    <property type="match status" value="1"/>
</dbReference>
<dbReference type="SUPFAM" id="SSF52540">
    <property type="entry name" value="P-loop containing nucleoside triphosphate hydrolases"/>
    <property type="match status" value="1"/>
</dbReference>
<dbReference type="SUPFAM" id="SSF50447">
    <property type="entry name" value="Translation proteins"/>
    <property type="match status" value="1"/>
</dbReference>
<dbReference type="PROSITE" id="PS00301">
    <property type="entry name" value="G_TR_1"/>
    <property type="match status" value="1"/>
</dbReference>
<dbReference type="PROSITE" id="PS51722">
    <property type="entry name" value="G_TR_2"/>
    <property type="match status" value="1"/>
</dbReference>
<sequence length="520" mass="59739">MSIKDEIESRKTFAIISHPDAGKTTLTEKLLLFGGAIREAGTVKGKKSGKFATSDWMKVEQERGISVTSSVMQFDYDDYNINILDTPGHEDFSEDTYRTLMAVDSAVMVIDCAKGIEPQTLKLFKVCKMRGIPIFTFINKLDRVGKEPFELLDEIEETLNIKTYPMNWPVGMGQNFFGIIDREQRTIEPFRDEEHLLHLNDDYELEEEHEITKDSTFSQAIDEFMLVEEAGEEFDNEMLLAGELTPVFFGSALANFGVQSFLNAYVDHAPMPNGRITKEAEEVSPFTPDFSGFIFKIQANMDPKHRDRIAFMRIVSGAFERGMDVKLQRTNKKQKITRSTSFMADDKETVNHAVAGDIIGLYDTGNYQIGDTLVGGNQKFSFEDLPQFTPELFMKVSAKNVMKQKHFHKGIEQLVQEGAIQYYKTLHTNQIILGAVGQLQFEVFEHRMKNEYNVDVVMEPVGRKIARWVENEDDIKDKMSTSRSILVQDRYEQKVFLFENEFATRWFEEKFPEIKLYSLL</sequence>
<reference key="1">
    <citation type="journal article" date="2009" name="Appl. Environ. Microbiol.">
        <title>Genome analysis of the meat starter culture bacterium Staphylococcus carnosus TM300.</title>
        <authorList>
            <person name="Rosenstein R."/>
            <person name="Nerz C."/>
            <person name="Biswas L."/>
            <person name="Resch A."/>
            <person name="Raddatz G."/>
            <person name="Schuster S.C."/>
            <person name="Goetz F."/>
        </authorList>
    </citation>
    <scope>NUCLEOTIDE SEQUENCE [LARGE SCALE GENOMIC DNA]</scope>
    <source>
        <strain>TM300</strain>
    </source>
</reference>
<comment type="function">
    <text evidence="1">Increases the formation of ribosomal termination complexes and stimulates activities of RF-1 and RF-2. It binds guanine nucleotides and has strong preference for UGA stop codons. It may interact directly with the ribosome. The stimulation of RF-1 and RF-2 is significantly reduced by GTP and GDP, but not by GMP.</text>
</comment>
<comment type="subcellular location">
    <subcellularLocation>
        <location evidence="1">Cytoplasm</location>
    </subcellularLocation>
</comment>
<comment type="similarity">
    <text evidence="1">Belongs to the TRAFAC class translation factor GTPase superfamily. Classic translation factor GTPase family. PrfC subfamily.</text>
</comment>
<protein>
    <recommendedName>
        <fullName evidence="1">Peptide chain release factor 3</fullName>
        <shortName evidence="1">RF-3</shortName>
    </recommendedName>
</protein>
<keyword id="KW-0963">Cytoplasm</keyword>
<keyword id="KW-0342">GTP-binding</keyword>
<keyword id="KW-0547">Nucleotide-binding</keyword>
<keyword id="KW-0648">Protein biosynthesis</keyword>
<keyword id="KW-1185">Reference proteome</keyword>